<protein>
    <recommendedName>
        <fullName evidence="8">Adenylyl cyclase X E</fullName>
        <ecNumber evidence="3">4.6.1.1</ecNumber>
    </recommendedName>
</protein>
<evidence type="ECO:0000250" key="1">
    <source>
        <dbReference type="UniProtKB" id="P26769"/>
    </source>
</evidence>
<evidence type="ECO:0000250" key="2">
    <source>
        <dbReference type="UniProtKB" id="P30803"/>
    </source>
</evidence>
<evidence type="ECO:0000250" key="3">
    <source>
        <dbReference type="UniProtKB" id="P40146"/>
    </source>
</evidence>
<evidence type="ECO:0000255" key="4"/>
<evidence type="ECO:0000255" key="5">
    <source>
        <dbReference type="PROSITE-ProRule" id="PRU00099"/>
    </source>
</evidence>
<evidence type="ECO:0000269" key="6">
    <source>
    </source>
</evidence>
<evidence type="ECO:0000305" key="7"/>
<evidence type="ECO:0000312" key="8">
    <source>
        <dbReference type="FlyBase" id="FBgn0040506"/>
    </source>
</evidence>
<evidence type="ECO:0000312" key="9">
    <source>
        <dbReference type="Proteomes" id="UP000000803"/>
    </source>
</evidence>
<keyword id="KW-0067">ATP-binding</keyword>
<keyword id="KW-0456">Lyase</keyword>
<keyword id="KW-0460">Magnesium</keyword>
<keyword id="KW-0472">Membrane</keyword>
<keyword id="KW-0479">Metal-binding</keyword>
<keyword id="KW-0547">Nucleotide-binding</keyword>
<keyword id="KW-1185">Reference proteome</keyword>
<keyword id="KW-0812">Transmembrane</keyword>
<keyword id="KW-1133">Transmembrane helix</keyword>
<name>ACXE_DROME</name>
<feature type="chain" id="PRO_0000445434" description="Adenylyl cyclase X E" evidence="7">
    <location>
        <begin position="1"/>
        <end position="1123"/>
    </location>
</feature>
<feature type="topological domain" description="Cytoplasmic" evidence="7">
    <location>
        <begin position="1"/>
        <end position="47"/>
    </location>
</feature>
<feature type="transmembrane region" description="Helical" evidence="4">
    <location>
        <begin position="48"/>
        <end position="68"/>
    </location>
</feature>
<feature type="topological domain" description="Extracellular" evidence="7">
    <location>
        <begin position="69"/>
        <end position="73"/>
    </location>
</feature>
<feature type="transmembrane region" description="Helical" evidence="4">
    <location>
        <begin position="74"/>
        <end position="94"/>
    </location>
</feature>
<feature type="topological domain" description="Cytoplasmic" evidence="7">
    <location>
        <begin position="95"/>
        <end position="106"/>
    </location>
</feature>
<feature type="transmembrane region" description="Helical" evidence="4">
    <location>
        <begin position="107"/>
        <end position="127"/>
    </location>
</feature>
<feature type="topological domain" description="Extracellular" evidence="7">
    <location>
        <begin position="128"/>
        <end position="137"/>
    </location>
</feature>
<feature type="transmembrane region" description="Helical" evidence="4">
    <location>
        <begin position="138"/>
        <end position="158"/>
    </location>
</feature>
<feature type="topological domain" description="Cytoplasmic" evidence="7">
    <location>
        <begin position="159"/>
        <end position="163"/>
    </location>
</feature>
<feature type="transmembrane region" description="Helical" evidence="4">
    <location>
        <begin position="164"/>
        <end position="184"/>
    </location>
</feature>
<feature type="topological domain" description="Extracellular" evidence="7">
    <location>
        <begin position="185"/>
        <end position="196"/>
    </location>
</feature>
<feature type="transmembrane region" description="Helical" evidence="4">
    <location>
        <begin position="197"/>
        <end position="217"/>
    </location>
</feature>
<feature type="topological domain" description="Cytoplasmic" evidence="7">
    <location>
        <begin position="218"/>
        <end position="581"/>
    </location>
</feature>
<feature type="transmembrane region" description="Helical" evidence="4">
    <location>
        <begin position="582"/>
        <end position="602"/>
    </location>
</feature>
<feature type="topological domain" description="Extracellular" evidence="7">
    <location>
        <begin position="603"/>
        <end position="608"/>
    </location>
</feature>
<feature type="transmembrane region" description="Helical" evidence="4">
    <location>
        <begin position="609"/>
        <end position="629"/>
    </location>
</feature>
<feature type="topological domain" description="Cytoplasmic" evidence="7">
    <location>
        <begin position="630"/>
        <end position="667"/>
    </location>
</feature>
<feature type="transmembrane region" description="Helical" evidence="4">
    <location>
        <begin position="668"/>
        <end position="688"/>
    </location>
</feature>
<feature type="topological domain" description="Extracellular" evidence="7">
    <location>
        <begin position="689"/>
        <end position="719"/>
    </location>
</feature>
<feature type="transmembrane region" description="Helical" evidence="4">
    <location>
        <begin position="720"/>
        <end position="740"/>
    </location>
</feature>
<feature type="topological domain" description="Cytoplasmic" evidence="7">
    <location>
        <begin position="741"/>
        <end position="743"/>
    </location>
</feature>
<feature type="transmembrane region" description="Helical" evidence="4">
    <location>
        <begin position="744"/>
        <end position="764"/>
    </location>
</feature>
<feature type="topological domain" description="Extracellular" evidence="7">
    <location>
        <begin position="765"/>
        <end position="772"/>
    </location>
</feature>
<feature type="transmembrane region" description="Helical" evidence="4">
    <location>
        <begin position="773"/>
        <end position="793"/>
    </location>
</feature>
<feature type="topological domain" description="Cytoplasmic" evidence="7">
    <location>
        <begin position="794"/>
        <end position="1123"/>
    </location>
</feature>
<feature type="binding site" evidence="2">
    <location>
        <begin position="346"/>
        <end position="348"/>
    </location>
    <ligand>
        <name>ATP</name>
        <dbReference type="ChEBI" id="CHEBI:30616"/>
    </ligand>
</feature>
<feature type="binding site" evidence="2">
    <location>
        <position position="348"/>
    </location>
    <ligand>
        <name>Mg(2+)</name>
        <dbReference type="ChEBI" id="CHEBI:18420"/>
        <label>1</label>
        <note>catalytic</note>
    </ligand>
</feature>
<feature type="binding site" evidence="2">
    <location>
        <position position="392"/>
    </location>
    <ligand>
        <name>ATP</name>
        <dbReference type="ChEBI" id="CHEBI:30616"/>
    </ligand>
</feature>
<feature type="binding site" evidence="1">
    <location>
        <position position="903"/>
    </location>
    <ligand>
        <name>ATP</name>
        <dbReference type="ChEBI" id="CHEBI:30616"/>
    </ligand>
</feature>
<feature type="binding site" evidence="1">
    <location>
        <begin position="1014"/>
        <end position="1016"/>
    </location>
    <ligand>
        <name>ATP</name>
        <dbReference type="ChEBI" id="CHEBI:30616"/>
    </ligand>
</feature>
<feature type="binding site" evidence="1">
    <location>
        <begin position="1021"/>
        <end position="1025"/>
    </location>
    <ligand>
        <name>ATP</name>
        <dbReference type="ChEBI" id="CHEBI:30616"/>
    </ligand>
</feature>
<feature type="binding site" evidence="1">
    <location>
        <position position="1061"/>
    </location>
    <ligand>
        <name>ATP</name>
        <dbReference type="ChEBI" id="CHEBI:30616"/>
    </ligand>
</feature>
<proteinExistence type="evidence at transcript level"/>
<accession>Q9VK50</accession>
<accession>F3YDG3</accession>
<sequence>MPRSLGNCQLNYSKERMWEPGYLKAKCAELRLESEFRLYRIRLWKSYLLTFFMLHIFVTSVHCALLLATIERRSIIYFDVALSIGCALVLILVLSVNFCDEFIAKHTWYMYASSIFASLTLVFADLTESIYHTYAHSWILGTFYDTYIIYMIYMFLPIHFISGAVLLALLVSGLYILYFVIFIAQGFAQFASALFSVGGMSVDIVHYLCLNLVGIFYRVMNDTVVRSSFLDRHQYIKEKIWLRNARLQEKQLLDSILPPQISLPLQKDIQGRIVMAKQGIHSWTAMERTMAIQIHPDVSILYADVVNYTHLTTTLTVEMLVKVLHDLYGRFDLAAYRYKVQRIKFLGDCYYCVAGLSDPDPDHANNCVILGLSMINHIMEVRDIHGLDINMRIGVHSGNLFAGVIGEAKLQFDIWGLDVTIANVLESTGVPGCVHISGATLNNLDVNRFDIEDGPEEARDHPLLKKYRIRSYIIRQDLHMDDEDSDEFLGDLHSISLCNMGAQPRISDSANQSLRALFHEELREEFRKMPVSAFSPKRLLGICRFNTGKEVPAHQNLNICLTFTDPILERAYLKQTDYMYKYSIILSASVGCSLVYIELMDTQMICSSCFVLPASVATIQCILALIAWYKKYCWTRYGRNNVPHHYNGFSCFIFRIHDKILNSLPIRICIYLFLMISSFFVMCLIVMSCQREEFEMAYIEERLFHYEQEAHICFHPWVTTNMLSLMICLTFTFAHIPIMVKTAVAILETLAYLLLIFFQFDFVFHHSVTTNPYFKSEYAHALLICITFLIMFVKERQIEFTNKVNFNWRVDLRKEENAASLTNHSIIIILNNILPSHIVDVYLNSLAKHELYFENYRMVSVMFAMLINFEMDLRSLRVLNEIIAEFDTLLLFYKEYYTVEKIKIVGCTYMAACGLDLNFAGSTSTNRKESIPPTEFNEEQSRRILFQQSNEDLDEVVFVMTSYALDMMRTLAKSNEAYQSIAGDRNITDGTIAIGISSGEVMAGIVGASQPHYDIWGNPVNMASRMESTGLPGHIHVTEETSEILQQFGITCSYRGMTFVKGRGKIPTYLVGIDENLNFIPQKATRFPSHQERSTVISLQSTYTHAENNNSIASTSRHTLQSL</sequence>
<dbReference type="EC" id="4.6.1.1" evidence="3"/>
<dbReference type="EMBL" id="AE014134">
    <property type="protein sequence ID" value="AAF53229.3"/>
    <property type="molecule type" value="Genomic_DNA"/>
</dbReference>
<dbReference type="EMBL" id="BT126324">
    <property type="protein sequence ID" value="AEB72004.1"/>
    <property type="status" value="ALT_INIT"/>
    <property type="molecule type" value="mRNA"/>
</dbReference>
<dbReference type="RefSeq" id="NP_652601.3">
    <property type="nucleotide sequence ID" value="NM_144344.3"/>
</dbReference>
<dbReference type="SMR" id="Q9VK50"/>
<dbReference type="FunCoup" id="Q9VK50">
    <property type="interactions" value="9"/>
</dbReference>
<dbReference type="STRING" id="7227.FBpp0302693"/>
<dbReference type="PaxDb" id="7227-FBpp0302693"/>
<dbReference type="EnsemblMetazoa" id="FBtr0310556">
    <property type="protein sequence ID" value="FBpp0302693"/>
    <property type="gene ID" value="FBgn0040506"/>
</dbReference>
<dbReference type="GeneID" id="53426"/>
<dbReference type="KEGG" id="dme:Dmel_CG17178"/>
<dbReference type="UCSC" id="CG17178-RA">
    <property type="organism name" value="d. melanogaster"/>
</dbReference>
<dbReference type="AGR" id="FB:FBgn0040506"/>
<dbReference type="CTD" id="53426"/>
<dbReference type="FlyBase" id="FBgn0040506">
    <property type="gene designation" value="ACXE"/>
</dbReference>
<dbReference type="VEuPathDB" id="VectorBase:FBgn0040506"/>
<dbReference type="eggNOG" id="KOG3619">
    <property type="taxonomic scope" value="Eukaryota"/>
</dbReference>
<dbReference type="GeneTree" id="ENSGT00940000168344"/>
<dbReference type="HOGENOM" id="CLU_001072_2_5_1"/>
<dbReference type="InParanoid" id="Q9VK50"/>
<dbReference type="OMA" id="WYMYASS"/>
<dbReference type="OrthoDB" id="10006362at2759"/>
<dbReference type="PhylomeDB" id="Q9VK50"/>
<dbReference type="Reactome" id="R-DME-163615">
    <property type="pathway name" value="PKA activation"/>
</dbReference>
<dbReference type="Reactome" id="R-DME-170660">
    <property type="pathway name" value="Adenylate cyclase activating pathway"/>
</dbReference>
<dbReference type="Reactome" id="R-DME-170670">
    <property type="pathway name" value="Adenylate cyclase inhibitory pathway"/>
</dbReference>
<dbReference type="Reactome" id="R-DME-5610787">
    <property type="pathway name" value="Hedgehog 'off' state"/>
</dbReference>
<dbReference type="BioGRID-ORCS" id="53426">
    <property type="hits" value="0 hits in 3 CRISPR screens"/>
</dbReference>
<dbReference type="ChiTaRS" id="ACXE">
    <property type="organism name" value="fly"/>
</dbReference>
<dbReference type="GenomeRNAi" id="53426"/>
<dbReference type="PRO" id="PR:Q9VK50"/>
<dbReference type="Proteomes" id="UP000000803">
    <property type="component" value="Chromosome 2L"/>
</dbReference>
<dbReference type="Bgee" id="FBgn0040506">
    <property type="expression patterns" value="Expressed in spermatocyte in testis and 7 other cell types or tissues"/>
</dbReference>
<dbReference type="ExpressionAtlas" id="Q9VK50">
    <property type="expression patterns" value="baseline and differential"/>
</dbReference>
<dbReference type="GO" id="GO:0016020">
    <property type="term" value="C:membrane"/>
    <property type="evidence" value="ECO:0000255"/>
    <property type="project" value="FlyBase"/>
</dbReference>
<dbReference type="GO" id="GO:0005886">
    <property type="term" value="C:plasma membrane"/>
    <property type="evidence" value="ECO:0000318"/>
    <property type="project" value="GO_Central"/>
</dbReference>
<dbReference type="GO" id="GO:0004016">
    <property type="term" value="F:adenylate cyclase activity"/>
    <property type="evidence" value="ECO:0000255"/>
    <property type="project" value="FlyBase"/>
</dbReference>
<dbReference type="GO" id="GO:0005524">
    <property type="term" value="F:ATP binding"/>
    <property type="evidence" value="ECO:0007669"/>
    <property type="project" value="UniProtKB-KW"/>
</dbReference>
<dbReference type="GO" id="GO:0046872">
    <property type="term" value="F:metal ion binding"/>
    <property type="evidence" value="ECO:0007669"/>
    <property type="project" value="UniProtKB-KW"/>
</dbReference>
<dbReference type="GO" id="GO:0007189">
    <property type="term" value="P:adenylate cyclase-activating G protein-coupled receptor signaling pathway"/>
    <property type="evidence" value="ECO:0000318"/>
    <property type="project" value="GO_Central"/>
</dbReference>
<dbReference type="GO" id="GO:0009190">
    <property type="term" value="P:cyclic nucleotide biosynthetic process"/>
    <property type="evidence" value="ECO:0007669"/>
    <property type="project" value="InterPro"/>
</dbReference>
<dbReference type="GO" id="GO:0035556">
    <property type="term" value="P:intracellular signal transduction"/>
    <property type="evidence" value="ECO:0007669"/>
    <property type="project" value="InterPro"/>
</dbReference>
<dbReference type="CDD" id="cd07302">
    <property type="entry name" value="CHD"/>
    <property type="match status" value="2"/>
</dbReference>
<dbReference type="FunFam" id="3.30.70.1230:FF:000024">
    <property type="entry name" value="ACXA, isoform A"/>
    <property type="match status" value="1"/>
</dbReference>
<dbReference type="FunFam" id="3.30.70.1230:FF:000027">
    <property type="entry name" value="ACXA, isoform A"/>
    <property type="match status" value="1"/>
</dbReference>
<dbReference type="Gene3D" id="3.30.70.1230">
    <property type="entry name" value="Nucleotide cyclase"/>
    <property type="match status" value="2"/>
</dbReference>
<dbReference type="InterPro" id="IPR001054">
    <property type="entry name" value="A/G_cyclase"/>
</dbReference>
<dbReference type="InterPro" id="IPR032628">
    <property type="entry name" value="AC_N"/>
</dbReference>
<dbReference type="InterPro" id="IPR029787">
    <property type="entry name" value="Nucleotide_cyclase"/>
</dbReference>
<dbReference type="PANTHER" id="PTHR45627">
    <property type="entry name" value="ADENYLATE CYCLASE TYPE 1"/>
    <property type="match status" value="1"/>
</dbReference>
<dbReference type="PANTHER" id="PTHR45627:SF23">
    <property type="entry name" value="AT30656P-RELATED"/>
    <property type="match status" value="1"/>
</dbReference>
<dbReference type="Pfam" id="PF16214">
    <property type="entry name" value="AC_N"/>
    <property type="match status" value="1"/>
</dbReference>
<dbReference type="Pfam" id="PF00211">
    <property type="entry name" value="Guanylate_cyc"/>
    <property type="match status" value="2"/>
</dbReference>
<dbReference type="SMART" id="SM00044">
    <property type="entry name" value="CYCc"/>
    <property type="match status" value="2"/>
</dbReference>
<dbReference type="SUPFAM" id="SSF55073">
    <property type="entry name" value="Nucleotide cyclase"/>
    <property type="match status" value="2"/>
</dbReference>
<dbReference type="PROSITE" id="PS50125">
    <property type="entry name" value="GUANYLATE_CYCLASE_2"/>
    <property type="match status" value="2"/>
</dbReference>
<organism evidence="9">
    <name type="scientific">Drosophila melanogaster</name>
    <name type="common">Fruit fly</name>
    <dbReference type="NCBI Taxonomy" id="7227"/>
    <lineage>
        <taxon>Eukaryota</taxon>
        <taxon>Metazoa</taxon>
        <taxon>Ecdysozoa</taxon>
        <taxon>Arthropoda</taxon>
        <taxon>Hexapoda</taxon>
        <taxon>Insecta</taxon>
        <taxon>Pterygota</taxon>
        <taxon>Neoptera</taxon>
        <taxon>Endopterygota</taxon>
        <taxon>Diptera</taxon>
        <taxon>Brachycera</taxon>
        <taxon>Muscomorpha</taxon>
        <taxon>Ephydroidea</taxon>
        <taxon>Drosophilidae</taxon>
        <taxon>Drosophila</taxon>
        <taxon>Sophophora</taxon>
    </lineage>
</organism>
<comment type="function">
    <text evidence="1">Catalyzes the formation of the signaling molecule cAMP in response to G-protein signaling.</text>
</comment>
<comment type="catalytic activity">
    <reaction evidence="3">
        <text>ATP = 3',5'-cyclic AMP + diphosphate</text>
        <dbReference type="Rhea" id="RHEA:15389"/>
        <dbReference type="ChEBI" id="CHEBI:30616"/>
        <dbReference type="ChEBI" id="CHEBI:33019"/>
        <dbReference type="ChEBI" id="CHEBI:58165"/>
        <dbReference type="EC" id="4.6.1.1"/>
    </reaction>
</comment>
<comment type="subcellular location">
    <subcellularLocation>
        <location evidence="4">Membrane</location>
        <topology evidence="4">Multi-pass membrane protein</topology>
    </subcellularLocation>
</comment>
<comment type="tissue specificity">
    <text evidence="6">Expressed in labella.</text>
</comment>
<comment type="disruption phenotype">
    <text evidence="6">RNAi-mediated knockdown in sugar gustatory neurons does not affect sucrose response.</text>
</comment>
<comment type="similarity">
    <text evidence="5">Belongs to the adenylyl cyclase class-4/guanylyl cyclase family.</text>
</comment>
<comment type="sequence caution" evidence="7">
    <conflict type="erroneous initiation">
        <sequence resource="EMBL-CDS" id="AEB72004"/>
    </conflict>
    <text>Extended N-terminus.</text>
</comment>
<gene>
    <name evidence="8" type="primary">ACXE</name>
    <name evidence="8" type="ORF">CG17178</name>
</gene>
<reference evidence="9" key="1">
    <citation type="journal article" date="2000" name="Science">
        <title>The genome sequence of Drosophila melanogaster.</title>
        <authorList>
            <person name="Adams M.D."/>
            <person name="Celniker S.E."/>
            <person name="Holt R.A."/>
            <person name="Evans C.A."/>
            <person name="Gocayne J.D."/>
            <person name="Amanatides P.G."/>
            <person name="Scherer S.E."/>
            <person name="Li P.W."/>
            <person name="Hoskins R.A."/>
            <person name="Galle R.F."/>
            <person name="George R.A."/>
            <person name="Lewis S.E."/>
            <person name="Richards S."/>
            <person name="Ashburner M."/>
            <person name="Henderson S.N."/>
            <person name="Sutton G.G."/>
            <person name="Wortman J.R."/>
            <person name="Yandell M.D."/>
            <person name="Zhang Q."/>
            <person name="Chen L.X."/>
            <person name="Brandon R.C."/>
            <person name="Rogers Y.-H.C."/>
            <person name="Blazej R.G."/>
            <person name="Champe M."/>
            <person name="Pfeiffer B.D."/>
            <person name="Wan K.H."/>
            <person name="Doyle C."/>
            <person name="Baxter E.G."/>
            <person name="Helt G."/>
            <person name="Nelson C.R."/>
            <person name="Miklos G.L.G."/>
            <person name="Abril J.F."/>
            <person name="Agbayani A."/>
            <person name="An H.-J."/>
            <person name="Andrews-Pfannkoch C."/>
            <person name="Baldwin D."/>
            <person name="Ballew R.M."/>
            <person name="Basu A."/>
            <person name="Baxendale J."/>
            <person name="Bayraktaroglu L."/>
            <person name="Beasley E.M."/>
            <person name="Beeson K.Y."/>
            <person name="Benos P.V."/>
            <person name="Berman B.P."/>
            <person name="Bhandari D."/>
            <person name="Bolshakov S."/>
            <person name="Borkova D."/>
            <person name="Botchan M.R."/>
            <person name="Bouck J."/>
            <person name="Brokstein P."/>
            <person name="Brottier P."/>
            <person name="Burtis K.C."/>
            <person name="Busam D.A."/>
            <person name="Butler H."/>
            <person name="Cadieu E."/>
            <person name="Center A."/>
            <person name="Chandra I."/>
            <person name="Cherry J.M."/>
            <person name="Cawley S."/>
            <person name="Dahlke C."/>
            <person name="Davenport L.B."/>
            <person name="Davies P."/>
            <person name="de Pablos B."/>
            <person name="Delcher A."/>
            <person name="Deng Z."/>
            <person name="Mays A.D."/>
            <person name="Dew I."/>
            <person name="Dietz S.M."/>
            <person name="Dodson K."/>
            <person name="Doup L.E."/>
            <person name="Downes M."/>
            <person name="Dugan-Rocha S."/>
            <person name="Dunkov B.C."/>
            <person name="Dunn P."/>
            <person name="Durbin K.J."/>
            <person name="Evangelista C.C."/>
            <person name="Ferraz C."/>
            <person name="Ferriera S."/>
            <person name="Fleischmann W."/>
            <person name="Fosler C."/>
            <person name="Gabrielian A.E."/>
            <person name="Garg N.S."/>
            <person name="Gelbart W.M."/>
            <person name="Glasser K."/>
            <person name="Glodek A."/>
            <person name="Gong F."/>
            <person name="Gorrell J.H."/>
            <person name="Gu Z."/>
            <person name="Guan P."/>
            <person name="Harris M."/>
            <person name="Harris N.L."/>
            <person name="Harvey D.A."/>
            <person name="Heiman T.J."/>
            <person name="Hernandez J.R."/>
            <person name="Houck J."/>
            <person name="Hostin D."/>
            <person name="Houston K.A."/>
            <person name="Howland T.J."/>
            <person name="Wei M.-H."/>
            <person name="Ibegwam C."/>
            <person name="Jalali M."/>
            <person name="Kalush F."/>
            <person name="Karpen G.H."/>
            <person name="Ke Z."/>
            <person name="Kennison J.A."/>
            <person name="Ketchum K.A."/>
            <person name="Kimmel B.E."/>
            <person name="Kodira C.D."/>
            <person name="Kraft C.L."/>
            <person name="Kravitz S."/>
            <person name="Kulp D."/>
            <person name="Lai Z."/>
            <person name="Lasko P."/>
            <person name="Lei Y."/>
            <person name="Levitsky A.A."/>
            <person name="Li J.H."/>
            <person name="Li Z."/>
            <person name="Liang Y."/>
            <person name="Lin X."/>
            <person name="Liu X."/>
            <person name="Mattei B."/>
            <person name="McIntosh T.C."/>
            <person name="McLeod M.P."/>
            <person name="McPherson D."/>
            <person name="Merkulov G."/>
            <person name="Milshina N.V."/>
            <person name="Mobarry C."/>
            <person name="Morris J."/>
            <person name="Moshrefi A."/>
            <person name="Mount S.M."/>
            <person name="Moy M."/>
            <person name="Murphy B."/>
            <person name="Murphy L."/>
            <person name="Muzny D.M."/>
            <person name="Nelson D.L."/>
            <person name="Nelson D.R."/>
            <person name="Nelson K.A."/>
            <person name="Nixon K."/>
            <person name="Nusskern D.R."/>
            <person name="Pacleb J.M."/>
            <person name="Palazzolo M."/>
            <person name="Pittman G.S."/>
            <person name="Pan S."/>
            <person name="Pollard J."/>
            <person name="Puri V."/>
            <person name="Reese M.G."/>
            <person name="Reinert K."/>
            <person name="Remington K."/>
            <person name="Saunders R.D.C."/>
            <person name="Scheeler F."/>
            <person name="Shen H."/>
            <person name="Shue B.C."/>
            <person name="Siden-Kiamos I."/>
            <person name="Simpson M."/>
            <person name="Skupski M.P."/>
            <person name="Smith T.J."/>
            <person name="Spier E."/>
            <person name="Spradling A.C."/>
            <person name="Stapleton M."/>
            <person name="Strong R."/>
            <person name="Sun E."/>
            <person name="Svirskas R."/>
            <person name="Tector C."/>
            <person name="Turner R."/>
            <person name="Venter E."/>
            <person name="Wang A.H."/>
            <person name="Wang X."/>
            <person name="Wang Z.-Y."/>
            <person name="Wassarman D.A."/>
            <person name="Weinstock G.M."/>
            <person name="Weissenbach J."/>
            <person name="Williams S.M."/>
            <person name="Woodage T."/>
            <person name="Worley K.C."/>
            <person name="Wu D."/>
            <person name="Yang S."/>
            <person name="Yao Q.A."/>
            <person name="Ye J."/>
            <person name="Yeh R.-F."/>
            <person name="Zaveri J.S."/>
            <person name="Zhan M."/>
            <person name="Zhang G."/>
            <person name="Zhao Q."/>
            <person name="Zheng L."/>
            <person name="Zheng X.H."/>
            <person name="Zhong F.N."/>
            <person name="Zhong W."/>
            <person name="Zhou X."/>
            <person name="Zhu S.C."/>
            <person name="Zhu X."/>
            <person name="Smith H.O."/>
            <person name="Gibbs R.A."/>
            <person name="Myers E.W."/>
            <person name="Rubin G.M."/>
            <person name="Venter J.C."/>
        </authorList>
    </citation>
    <scope>NUCLEOTIDE SEQUENCE [LARGE SCALE GENOMIC DNA]</scope>
    <source>
        <strain evidence="9">Berkeley</strain>
    </source>
</reference>
<reference evidence="9" key="2">
    <citation type="journal article" date="2002" name="Genome Biol.">
        <title>Annotation of the Drosophila melanogaster euchromatic genome: a systematic review.</title>
        <authorList>
            <person name="Misra S."/>
            <person name="Crosby M.A."/>
            <person name="Mungall C.J."/>
            <person name="Matthews B.B."/>
            <person name="Campbell K.S."/>
            <person name="Hradecky P."/>
            <person name="Huang Y."/>
            <person name="Kaminker J.S."/>
            <person name="Millburn G.H."/>
            <person name="Prochnik S.E."/>
            <person name="Smith C.D."/>
            <person name="Tupy J.L."/>
            <person name="Whitfield E.J."/>
            <person name="Bayraktaroglu L."/>
            <person name="Berman B.P."/>
            <person name="Bettencourt B.R."/>
            <person name="Celniker S.E."/>
            <person name="de Grey A.D.N.J."/>
            <person name="Drysdale R.A."/>
            <person name="Harris N.L."/>
            <person name="Richter J."/>
            <person name="Russo S."/>
            <person name="Schroeder A.J."/>
            <person name="Shu S.Q."/>
            <person name="Stapleton M."/>
            <person name="Yamada C."/>
            <person name="Ashburner M."/>
            <person name="Gelbart W.M."/>
            <person name="Rubin G.M."/>
            <person name="Lewis S.E."/>
        </authorList>
    </citation>
    <scope>GENOME REANNOTATION</scope>
    <source>
        <strain evidence="9">Berkeley</strain>
    </source>
</reference>
<reference evidence="7" key="3">
    <citation type="journal article" date="2008" name="Eur. J. Neurosci.">
        <title>Adenylyl cyclase encoded by AC78C participates in sugar perception in Drosophila melanogaster.</title>
        <authorList>
            <person name="Ueno K."/>
            <person name="Kidokoro Y."/>
        </authorList>
    </citation>
    <scope>TISSUE SPECIFICITY</scope>
    <scope>DISRUPTION PHENOTYPE</scope>
</reference>